<sequence>MPAFNRLFPLVSLVLIYWASVCFPVCVEVPSETEAVQGNPMKLRCISCMKREEVEATTVVEWFYRPEGGKDFLIYEYRNGHQEVESPFQGRLQWNGSKDLQDVSITVLNVTLNDSGLYTCNVSREFEFEAHRPFVKTTRLIPLRVTEEAGEDFTSVVSEIMMYILLVFLTLWLLIEMIYCYRKVSKAEEAAQENASDYLAIPSENKENSAVPVEE</sequence>
<feature type="signal peptide" evidence="3">
    <location>
        <begin position="1"/>
        <end position="22"/>
    </location>
</feature>
<feature type="chain" id="PRO_0000014934" description="Sodium channel regulatory subunit beta-3">
    <location>
        <begin position="23"/>
        <end position="215"/>
    </location>
</feature>
<feature type="topological domain" description="Extracellular" evidence="5">
    <location>
        <begin position="23"/>
        <end position="156"/>
    </location>
</feature>
<feature type="transmembrane region" description="Helical" evidence="2">
    <location>
        <begin position="157"/>
        <end position="178"/>
    </location>
</feature>
<feature type="topological domain" description="Cytoplasmic" evidence="5">
    <location>
        <begin position="179"/>
        <end position="215"/>
    </location>
</feature>
<feature type="domain" description="Ig-like C2-type" evidence="3">
    <location>
        <begin position="24"/>
        <end position="138"/>
    </location>
</feature>
<feature type="glycosylation site" description="N-linked (GlcNAc...) asparagine" evidence="3">
    <location>
        <position position="95"/>
    </location>
</feature>
<feature type="glycosylation site" description="N-linked (GlcNAc...) asparagine" evidence="3">
    <location>
        <position position="109"/>
    </location>
</feature>
<feature type="glycosylation site" description="N-linked (GlcNAc...) asparagine" evidence="3">
    <location>
        <position position="113"/>
    </location>
</feature>
<feature type="glycosylation site" description="N-linked (GlcNAc...) asparagine" evidence="3">
    <location>
        <position position="121"/>
    </location>
</feature>
<feature type="disulfide bond" evidence="2 4">
    <location>
        <begin position="26"/>
        <end position="48"/>
    </location>
</feature>
<feature type="disulfide bond" evidence="2 4">
    <location>
        <begin position="45"/>
        <end position="120"/>
    </location>
</feature>
<proteinExistence type="evidence at transcript level"/>
<comment type="function">
    <text evidence="1 2">Regulatory subunit of multiple voltage-gated sodium (Nav) channels directly mediating the depolarization of excitable membranes. Navs, also called VGSCs (voltage-gated sodium channels) or VDSCs (voltage-dependent sodium channels), operate by switching between closed and open conformations depending on the voltage difference across the membrane. In the open conformation they allow Na(+) ions to selectively pass through the pore, along their electrochemical gradient. The influx of Na+ ions provokes membrane depolarization, initiating the propagation of electrical signals throughout cells and tissues. The accessory beta subunits participate in localization and functional modulation of the Nav channels (By similarity). Modulates the activity of SCN2A/Nav1.2, causing a hyperpolarizing shift in the voltage-dependence of inactivation of the channel and increasing the fraction of channels operating in the fast gating mode (By similarity). Modulates the activity of SCN5A/Nav1.5. Could also regulate the atypical sodium channel SCN7A/Nav2.1. Modulates the activity of SCN10A/Nav1.8, regulating its oligomerization and accelerating the recovery from inactivation (By similarity).</text>
</comment>
<comment type="subunit">
    <text evidence="1 2">A voltage-gated sodium (Nav) channel consists of an ion-conducting pore-forming alpha subunit functional on its own that is regulated by one or more beta subunits. Forms homodimers and homotrimers. SCN3B is non-covalently associated with alpha subunits and induces the formation of alpha subunit oligomers, including trimers. Interacts with SCN5A/Nav1.5; regulatory subunit of SCN5A/Nav1.5. Interacts with SCN7A/Nav2.1; probable regulatory subunit of SCN7A/Nav2.1 (By similarity). Interacts with SCN10A; regulatory subunit of SCN10A/Nav1.8. Interacts with NFASC; probably involved in targeting the sodium channels to the nodes of Ranvier (By similarity).</text>
</comment>
<comment type="subcellular location">
    <subcellularLocation>
        <location evidence="2">Cell membrane</location>
        <topology evidence="2">Single-pass type I membrane protein</topology>
    </subcellularLocation>
</comment>
<comment type="PTM">
    <text evidence="2">Intramolecular disulfide bonds favor the voltage-gated sodium channel oligomeric complex assembly.</text>
</comment>
<comment type="PTM">
    <text evidence="2">N-glycosylated.</text>
</comment>
<comment type="similarity">
    <text evidence="5">Belongs to the sodium channel auxiliary subunit SCN3B (TC 8.A.17) family.</text>
</comment>
<protein>
    <recommendedName>
        <fullName evidence="5">Sodium channel regulatory subunit beta-3</fullName>
    </recommendedName>
</protein>
<organism>
    <name type="scientific">Macaca fascicularis</name>
    <name type="common">Crab-eating macaque</name>
    <name type="synonym">Cynomolgus monkey</name>
    <dbReference type="NCBI Taxonomy" id="9541"/>
    <lineage>
        <taxon>Eukaryota</taxon>
        <taxon>Metazoa</taxon>
        <taxon>Chordata</taxon>
        <taxon>Craniata</taxon>
        <taxon>Vertebrata</taxon>
        <taxon>Euteleostomi</taxon>
        <taxon>Mammalia</taxon>
        <taxon>Eutheria</taxon>
        <taxon>Euarchontoglires</taxon>
        <taxon>Primates</taxon>
        <taxon>Haplorrhini</taxon>
        <taxon>Catarrhini</taxon>
        <taxon>Cercopithecidae</taxon>
        <taxon>Cercopithecinae</taxon>
        <taxon>Macaca</taxon>
    </lineage>
</organism>
<dbReference type="EMBL" id="AB097521">
    <property type="protein sequence ID" value="BAC41746.1"/>
    <property type="molecule type" value="mRNA"/>
</dbReference>
<dbReference type="RefSeq" id="NP_001271569.1">
    <property type="nucleotide sequence ID" value="NM_001284640.1"/>
</dbReference>
<dbReference type="RefSeq" id="XP_065385229.1">
    <property type="nucleotide sequence ID" value="XM_065529157.1"/>
</dbReference>
<dbReference type="SMR" id="Q8HXJ7"/>
<dbReference type="STRING" id="9541.ENSMFAP00000004109"/>
<dbReference type="GlyCosmos" id="Q8HXJ7">
    <property type="glycosylation" value="4 sites, No reported glycans"/>
</dbReference>
<dbReference type="Ensembl" id="ENSMFAT00000022770.2">
    <property type="protein sequence ID" value="ENSMFAP00000004109.1"/>
    <property type="gene ID" value="ENSMFAG00000001774.2"/>
</dbReference>
<dbReference type="GeneID" id="102139038"/>
<dbReference type="VEuPathDB" id="HostDB:ENSMFAG00000001774"/>
<dbReference type="eggNOG" id="ENOG502QWH0">
    <property type="taxonomic scope" value="Eukaryota"/>
</dbReference>
<dbReference type="GeneTree" id="ENSGT00390000018560"/>
<dbReference type="OMA" id="QGSHMKL"/>
<dbReference type="Proteomes" id="UP000233100">
    <property type="component" value="Chromosome 14"/>
</dbReference>
<dbReference type="Bgee" id="ENSMFAG00000001774">
    <property type="expression patterns" value="Expressed in temporal lobe and 4 other cell types or tissues"/>
</dbReference>
<dbReference type="GO" id="GO:0005886">
    <property type="term" value="C:plasma membrane"/>
    <property type="evidence" value="ECO:0000250"/>
    <property type="project" value="UniProtKB"/>
</dbReference>
<dbReference type="GO" id="GO:0001518">
    <property type="term" value="C:voltage-gated sodium channel complex"/>
    <property type="evidence" value="ECO:0000250"/>
    <property type="project" value="UniProtKB"/>
</dbReference>
<dbReference type="GO" id="GO:0005272">
    <property type="term" value="F:sodium channel activity"/>
    <property type="evidence" value="ECO:0007669"/>
    <property type="project" value="UniProtKB-KW"/>
</dbReference>
<dbReference type="GO" id="GO:0019871">
    <property type="term" value="F:sodium channel inhibitor activity"/>
    <property type="evidence" value="ECO:0007669"/>
    <property type="project" value="TreeGrafter"/>
</dbReference>
<dbReference type="GO" id="GO:0017080">
    <property type="term" value="F:sodium channel regulator activity"/>
    <property type="evidence" value="ECO:0000250"/>
    <property type="project" value="UniProtKB"/>
</dbReference>
<dbReference type="GO" id="GO:0044325">
    <property type="term" value="F:transmembrane transporter binding"/>
    <property type="evidence" value="ECO:0007669"/>
    <property type="project" value="TreeGrafter"/>
</dbReference>
<dbReference type="GO" id="GO:0086091">
    <property type="term" value="P:regulation of heart rate by cardiac conduction"/>
    <property type="evidence" value="ECO:0007669"/>
    <property type="project" value="TreeGrafter"/>
</dbReference>
<dbReference type="GO" id="GO:0086005">
    <property type="term" value="P:ventricular cardiac muscle cell action potential"/>
    <property type="evidence" value="ECO:0007669"/>
    <property type="project" value="TreeGrafter"/>
</dbReference>
<dbReference type="FunFam" id="2.60.40.10:FF:000375">
    <property type="entry name" value="Sodium channel beta 1 subunit"/>
    <property type="match status" value="1"/>
</dbReference>
<dbReference type="Gene3D" id="2.60.40.10">
    <property type="entry name" value="Immunoglobulins"/>
    <property type="match status" value="1"/>
</dbReference>
<dbReference type="InterPro" id="IPR007110">
    <property type="entry name" value="Ig-like_dom"/>
</dbReference>
<dbReference type="InterPro" id="IPR036179">
    <property type="entry name" value="Ig-like_dom_sf"/>
</dbReference>
<dbReference type="InterPro" id="IPR013783">
    <property type="entry name" value="Ig-like_fold"/>
</dbReference>
<dbReference type="InterPro" id="IPR003599">
    <property type="entry name" value="Ig_sub"/>
</dbReference>
<dbReference type="InterPro" id="IPR013106">
    <property type="entry name" value="Ig_V-set"/>
</dbReference>
<dbReference type="InterPro" id="IPR027098">
    <property type="entry name" value="Na_channel_b1/b3"/>
</dbReference>
<dbReference type="PANTHER" id="PTHR10546">
    <property type="entry name" value="SODIUM CHANNEL SUBUNIT BETA-1 AND 3"/>
    <property type="match status" value="1"/>
</dbReference>
<dbReference type="PANTHER" id="PTHR10546:SF1">
    <property type="entry name" value="SODIUM CHANNEL SUBUNIT BETA-3"/>
    <property type="match status" value="1"/>
</dbReference>
<dbReference type="Pfam" id="PF07686">
    <property type="entry name" value="V-set"/>
    <property type="match status" value="1"/>
</dbReference>
<dbReference type="SMART" id="SM00409">
    <property type="entry name" value="IG"/>
    <property type="match status" value="1"/>
</dbReference>
<dbReference type="SUPFAM" id="SSF48726">
    <property type="entry name" value="Immunoglobulin"/>
    <property type="match status" value="1"/>
</dbReference>
<dbReference type="PROSITE" id="PS50835">
    <property type="entry name" value="IG_LIKE"/>
    <property type="match status" value="1"/>
</dbReference>
<gene>
    <name evidence="2" type="primary">SCN3B</name>
    <name type="ORF">QmoA-13657</name>
</gene>
<evidence type="ECO:0000250" key="1">
    <source>
        <dbReference type="UniProtKB" id="Q9JK00"/>
    </source>
</evidence>
<evidence type="ECO:0000250" key="2">
    <source>
        <dbReference type="UniProtKB" id="Q9NY72"/>
    </source>
</evidence>
<evidence type="ECO:0000255" key="3"/>
<evidence type="ECO:0000255" key="4">
    <source>
        <dbReference type="PROSITE-ProRule" id="PRU00114"/>
    </source>
</evidence>
<evidence type="ECO:0000305" key="5"/>
<name>SCN3B_MACFA</name>
<reference key="1">
    <citation type="journal article" date="2001" name="Gene">
        <title>Assignment of 118 novel cDNAs of cynomolgus monkey brain to human chromosomes.</title>
        <authorList>
            <person name="Osada N."/>
            <person name="Hida M."/>
            <person name="Kususda J."/>
            <person name="Tanuma R."/>
            <person name="Iseki K."/>
            <person name="Hirata M."/>
            <person name="Suto Y."/>
            <person name="Hirai M."/>
            <person name="Terao K."/>
            <person name="Suzuki Y."/>
            <person name="Sugano S."/>
            <person name="Hashimoto K."/>
        </authorList>
    </citation>
    <scope>NUCLEOTIDE SEQUENCE [LARGE SCALE MRNA]</scope>
    <source>
        <tissue>Medulla oblongata</tissue>
    </source>
</reference>
<keyword id="KW-1003">Cell membrane</keyword>
<keyword id="KW-1015">Disulfide bond</keyword>
<keyword id="KW-0325">Glycoprotein</keyword>
<keyword id="KW-0393">Immunoglobulin domain</keyword>
<keyword id="KW-0407">Ion channel</keyword>
<keyword id="KW-0406">Ion transport</keyword>
<keyword id="KW-0472">Membrane</keyword>
<keyword id="KW-1185">Reference proteome</keyword>
<keyword id="KW-0732">Signal</keyword>
<keyword id="KW-0915">Sodium</keyword>
<keyword id="KW-0894">Sodium channel</keyword>
<keyword id="KW-0739">Sodium transport</keyword>
<keyword id="KW-0812">Transmembrane</keyword>
<keyword id="KW-1133">Transmembrane helix</keyword>
<keyword id="KW-0813">Transport</keyword>
<keyword id="KW-0851">Voltage-gated channel</keyword>
<accession>Q8HXJ7</accession>